<comment type="function">
    <text evidence="1">Component of the acetyl coenzyme A carboxylase (ACC) complex. First, biotin carboxylase catalyzes the carboxylation of biotin on its carrier protein (BCCP) and then the CO(2) group is transferred by the carboxyltransferase to acetyl-CoA to form malonyl-CoA.</text>
</comment>
<comment type="catalytic activity">
    <reaction evidence="1">
        <text>N(6)-carboxybiotinyl-L-lysyl-[protein] + acetyl-CoA = N(6)-biotinyl-L-lysyl-[protein] + malonyl-CoA</text>
        <dbReference type="Rhea" id="RHEA:54728"/>
        <dbReference type="Rhea" id="RHEA-COMP:10505"/>
        <dbReference type="Rhea" id="RHEA-COMP:10506"/>
        <dbReference type="ChEBI" id="CHEBI:57288"/>
        <dbReference type="ChEBI" id="CHEBI:57384"/>
        <dbReference type="ChEBI" id="CHEBI:83144"/>
        <dbReference type="ChEBI" id="CHEBI:83145"/>
        <dbReference type="EC" id="2.1.3.15"/>
    </reaction>
</comment>
<comment type="pathway">
    <text evidence="1">Lipid metabolism; malonyl-CoA biosynthesis; malonyl-CoA from acetyl-CoA: step 1/1.</text>
</comment>
<comment type="subunit">
    <text evidence="1">Acetyl-CoA carboxylase is a heterohexamer composed of biotin carboxyl carrier protein (AccB), biotin carboxylase (AccC) and two subunits each of ACCase subunit alpha (AccA) and ACCase subunit beta (AccD).</text>
</comment>
<comment type="subcellular location">
    <subcellularLocation>
        <location evidence="1">Cytoplasm</location>
    </subcellularLocation>
</comment>
<comment type="similarity">
    <text evidence="1">Belongs to the AccA family.</text>
</comment>
<dbReference type="EC" id="2.1.3.15" evidence="1"/>
<dbReference type="EMBL" id="CP001215">
    <property type="protein sequence ID" value="ACP15908.1"/>
    <property type="molecule type" value="Genomic_DNA"/>
</dbReference>
<dbReference type="RefSeq" id="WP_000818794.1">
    <property type="nucleotide sequence ID" value="NC_012581.1"/>
</dbReference>
<dbReference type="SMR" id="C3L8X9"/>
<dbReference type="GeneID" id="75087757"/>
<dbReference type="KEGG" id="bah:BAMEG_4876"/>
<dbReference type="HOGENOM" id="CLU_015486_0_2_9"/>
<dbReference type="UniPathway" id="UPA00655">
    <property type="reaction ID" value="UER00711"/>
</dbReference>
<dbReference type="GO" id="GO:0009317">
    <property type="term" value="C:acetyl-CoA carboxylase complex"/>
    <property type="evidence" value="ECO:0007669"/>
    <property type="project" value="InterPro"/>
</dbReference>
<dbReference type="GO" id="GO:0003989">
    <property type="term" value="F:acetyl-CoA carboxylase activity"/>
    <property type="evidence" value="ECO:0007669"/>
    <property type="project" value="InterPro"/>
</dbReference>
<dbReference type="GO" id="GO:0005524">
    <property type="term" value="F:ATP binding"/>
    <property type="evidence" value="ECO:0007669"/>
    <property type="project" value="UniProtKB-KW"/>
</dbReference>
<dbReference type="GO" id="GO:0016743">
    <property type="term" value="F:carboxyl- or carbamoyltransferase activity"/>
    <property type="evidence" value="ECO:0007669"/>
    <property type="project" value="UniProtKB-UniRule"/>
</dbReference>
<dbReference type="GO" id="GO:0006633">
    <property type="term" value="P:fatty acid biosynthetic process"/>
    <property type="evidence" value="ECO:0007669"/>
    <property type="project" value="UniProtKB-KW"/>
</dbReference>
<dbReference type="GO" id="GO:2001295">
    <property type="term" value="P:malonyl-CoA biosynthetic process"/>
    <property type="evidence" value="ECO:0007669"/>
    <property type="project" value="UniProtKB-UniRule"/>
</dbReference>
<dbReference type="Gene3D" id="3.90.226.10">
    <property type="entry name" value="2-enoyl-CoA Hydratase, Chain A, domain 1"/>
    <property type="match status" value="1"/>
</dbReference>
<dbReference type="HAMAP" id="MF_00823">
    <property type="entry name" value="AcetylCoA_CT_alpha"/>
    <property type="match status" value="1"/>
</dbReference>
<dbReference type="InterPro" id="IPR001095">
    <property type="entry name" value="Acetyl_CoA_COase_a_su"/>
</dbReference>
<dbReference type="InterPro" id="IPR029045">
    <property type="entry name" value="ClpP/crotonase-like_dom_sf"/>
</dbReference>
<dbReference type="InterPro" id="IPR011763">
    <property type="entry name" value="COA_CT_C"/>
</dbReference>
<dbReference type="NCBIfam" id="TIGR00513">
    <property type="entry name" value="accA"/>
    <property type="match status" value="1"/>
</dbReference>
<dbReference type="NCBIfam" id="NF041504">
    <property type="entry name" value="AccA_sub"/>
    <property type="match status" value="1"/>
</dbReference>
<dbReference type="NCBIfam" id="NF004344">
    <property type="entry name" value="PRK05724.1"/>
    <property type="match status" value="1"/>
</dbReference>
<dbReference type="PANTHER" id="PTHR42853">
    <property type="entry name" value="ACETYL-COENZYME A CARBOXYLASE CARBOXYL TRANSFERASE SUBUNIT ALPHA"/>
    <property type="match status" value="1"/>
</dbReference>
<dbReference type="PANTHER" id="PTHR42853:SF3">
    <property type="entry name" value="ACETYL-COENZYME A CARBOXYLASE CARBOXYL TRANSFERASE SUBUNIT ALPHA, CHLOROPLASTIC"/>
    <property type="match status" value="1"/>
</dbReference>
<dbReference type="Pfam" id="PF03255">
    <property type="entry name" value="ACCA"/>
    <property type="match status" value="1"/>
</dbReference>
<dbReference type="PRINTS" id="PR01069">
    <property type="entry name" value="ACCCTRFRASEA"/>
</dbReference>
<dbReference type="SUPFAM" id="SSF52096">
    <property type="entry name" value="ClpP/crotonase"/>
    <property type="match status" value="1"/>
</dbReference>
<dbReference type="PROSITE" id="PS50989">
    <property type="entry name" value="COA_CT_CTER"/>
    <property type="match status" value="1"/>
</dbReference>
<name>ACCA_BACAC</name>
<accession>C3L8X9</accession>
<sequence>MAELEFEKPVVELRNKIRELKDYTKNSQMDFSEEIRILEDKLENLEEDIYGNMKVWDRVQIARHAERPTTLDYIEHLFTDFFECHGDRLFGDDAAIVGGIAKYKGMPVTVIGHQRGKDTKENIRRNFGMPHPEGYRKALRLMKQAEKFNRPIICFIDTKGAYPGKAAEERGQSEAIARNLFEMAGLTVPVICIVIGEGGSGGALGLGVGDYIHMLENSTYSVITPEGAAAILWKDAGKAKEAAEAMRITAADLKELGVIDEIIPEAKGGAHRNVLKQSENIDLMLRKTFEQLNGISKDELIEKRYEKYMKIGQVSFSNASIWIK</sequence>
<reference key="1">
    <citation type="submission" date="2008-10" db="EMBL/GenBank/DDBJ databases">
        <title>Genome sequence of Bacillus anthracis str. CDC 684.</title>
        <authorList>
            <person name="Dodson R.J."/>
            <person name="Munk A.C."/>
            <person name="Brettin T."/>
            <person name="Bruce D."/>
            <person name="Detter C."/>
            <person name="Tapia R."/>
            <person name="Han C."/>
            <person name="Sutton G."/>
            <person name="Sims D."/>
        </authorList>
    </citation>
    <scope>NUCLEOTIDE SEQUENCE [LARGE SCALE GENOMIC DNA]</scope>
    <source>
        <strain>CDC 684 / NRRL 3495</strain>
    </source>
</reference>
<protein>
    <recommendedName>
        <fullName evidence="1">Acetyl-coenzyme A carboxylase carboxyl transferase subunit alpha</fullName>
        <shortName evidence="1">ACCase subunit alpha</shortName>
        <shortName evidence="1">Acetyl-CoA carboxylase carboxyltransferase subunit alpha</shortName>
        <ecNumber evidence="1">2.1.3.15</ecNumber>
    </recommendedName>
</protein>
<feature type="chain" id="PRO_1000148731" description="Acetyl-coenzyme A carboxylase carboxyl transferase subunit alpha">
    <location>
        <begin position="1"/>
        <end position="324"/>
    </location>
</feature>
<feature type="domain" description="CoA carboxyltransferase C-terminal" evidence="2">
    <location>
        <begin position="37"/>
        <end position="291"/>
    </location>
</feature>
<proteinExistence type="inferred from homology"/>
<organism>
    <name type="scientific">Bacillus anthracis (strain CDC 684 / NRRL 3495)</name>
    <dbReference type="NCBI Taxonomy" id="568206"/>
    <lineage>
        <taxon>Bacteria</taxon>
        <taxon>Bacillati</taxon>
        <taxon>Bacillota</taxon>
        <taxon>Bacilli</taxon>
        <taxon>Bacillales</taxon>
        <taxon>Bacillaceae</taxon>
        <taxon>Bacillus</taxon>
        <taxon>Bacillus cereus group</taxon>
    </lineage>
</organism>
<evidence type="ECO:0000255" key="1">
    <source>
        <dbReference type="HAMAP-Rule" id="MF_00823"/>
    </source>
</evidence>
<evidence type="ECO:0000255" key="2">
    <source>
        <dbReference type="PROSITE-ProRule" id="PRU01137"/>
    </source>
</evidence>
<keyword id="KW-0067">ATP-binding</keyword>
<keyword id="KW-0963">Cytoplasm</keyword>
<keyword id="KW-0275">Fatty acid biosynthesis</keyword>
<keyword id="KW-0276">Fatty acid metabolism</keyword>
<keyword id="KW-0444">Lipid biosynthesis</keyword>
<keyword id="KW-0443">Lipid metabolism</keyword>
<keyword id="KW-0547">Nucleotide-binding</keyword>
<keyword id="KW-0808">Transferase</keyword>
<gene>
    <name evidence="1" type="primary">accA</name>
    <name type="ordered locus">BAMEG_4876</name>
</gene>